<dbReference type="EMBL" id="CP000094">
    <property type="protein sequence ID" value="ABA76592.1"/>
    <property type="molecule type" value="Genomic_DNA"/>
</dbReference>
<dbReference type="RefSeq" id="WP_011336008.1">
    <property type="nucleotide sequence ID" value="NC_007492.2"/>
</dbReference>
<dbReference type="SMR" id="Q3K6L2"/>
<dbReference type="KEGG" id="pfo:Pfl01_4855"/>
<dbReference type="eggNOG" id="COG0268">
    <property type="taxonomic scope" value="Bacteria"/>
</dbReference>
<dbReference type="HOGENOM" id="CLU_160655_4_0_6"/>
<dbReference type="Proteomes" id="UP000002704">
    <property type="component" value="Chromosome"/>
</dbReference>
<dbReference type="GO" id="GO:0005829">
    <property type="term" value="C:cytosol"/>
    <property type="evidence" value="ECO:0007669"/>
    <property type="project" value="TreeGrafter"/>
</dbReference>
<dbReference type="GO" id="GO:0015935">
    <property type="term" value="C:small ribosomal subunit"/>
    <property type="evidence" value="ECO:0007669"/>
    <property type="project" value="TreeGrafter"/>
</dbReference>
<dbReference type="GO" id="GO:0070181">
    <property type="term" value="F:small ribosomal subunit rRNA binding"/>
    <property type="evidence" value="ECO:0007669"/>
    <property type="project" value="TreeGrafter"/>
</dbReference>
<dbReference type="GO" id="GO:0003735">
    <property type="term" value="F:structural constituent of ribosome"/>
    <property type="evidence" value="ECO:0007669"/>
    <property type="project" value="InterPro"/>
</dbReference>
<dbReference type="GO" id="GO:0006412">
    <property type="term" value="P:translation"/>
    <property type="evidence" value="ECO:0007669"/>
    <property type="project" value="UniProtKB-UniRule"/>
</dbReference>
<dbReference type="FunFam" id="1.20.58.110:FF:000001">
    <property type="entry name" value="30S ribosomal protein S20"/>
    <property type="match status" value="1"/>
</dbReference>
<dbReference type="Gene3D" id="1.20.58.110">
    <property type="entry name" value="Ribosomal protein S20"/>
    <property type="match status" value="1"/>
</dbReference>
<dbReference type="HAMAP" id="MF_00500">
    <property type="entry name" value="Ribosomal_bS20"/>
    <property type="match status" value="1"/>
</dbReference>
<dbReference type="InterPro" id="IPR002583">
    <property type="entry name" value="Ribosomal_bS20"/>
</dbReference>
<dbReference type="InterPro" id="IPR036510">
    <property type="entry name" value="Ribosomal_bS20_sf"/>
</dbReference>
<dbReference type="NCBIfam" id="TIGR00029">
    <property type="entry name" value="S20"/>
    <property type="match status" value="1"/>
</dbReference>
<dbReference type="PANTHER" id="PTHR33398">
    <property type="entry name" value="30S RIBOSOMAL PROTEIN S20"/>
    <property type="match status" value="1"/>
</dbReference>
<dbReference type="PANTHER" id="PTHR33398:SF1">
    <property type="entry name" value="SMALL RIBOSOMAL SUBUNIT PROTEIN BS20C"/>
    <property type="match status" value="1"/>
</dbReference>
<dbReference type="Pfam" id="PF01649">
    <property type="entry name" value="Ribosomal_S20p"/>
    <property type="match status" value="1"/>
</dbReference>
<dbReference type="SUPFAM" id="SSF46992">
    <property type="entry name" value="Ribosomal protein S20"/>
    <property type="match status" value="1"/>
</dbReference>
<name>RS20_PSEPF</name>
<accession>Q3K6L2</accession>
<proteinExistence type="inferred from homology"/>
<gene>
    <name evidence="1" type="primary">rpsT</name>
    <name type="ordered locus">Pfl01_4855</name>
</gene>
<comment type="function">
    <text evidence="1">Binds directly to 16S ribosomal RNA.</text>
</comment>
<comment type="similarity">
    <text evidence="1">Belongs to the bacterial ribosomal protein bS20 family.</text>
</comment>
<keyword id="KW-0687">Ribonucleoprotein</keyword>
<keyword id="KW-0689">Ribosomal protein</keyword>
<keyword id="KW-0694">RNA-binding</keyword>
<keyword id="KW-0699">rRNA-binding</keyword>
<feature type="chain" id="PRO_0000236448" description="Small ribosomal subunit protein bS20">
    <location>
        <begin position="1"/>
        <end position="90"/>
    </location>
</feature>
<feature type="region of interest" description="Disordered" evidence="2">
    <location>
        <begin position="1"/>
        <end position="25"/>
    </location>
</feature>
<feature type="compositionally biased region" description="Basic residues" evidence="2">
    <location>
        <begin position="7"/>
        <end position="20"/>
    </location>
</feature>
<protein>
    <recommendedName>
        <fullName evidence="1">Small ribosomal subunit protein bS20</fullName>
    </recommendedName>
    <alternativeName>
        <fullName evidence="3">30S ribosomal protein S20</fullName>
    </alternativeName>
</protein>
<evidence type="ECO:0000255" key="1">
    <source>
        <dbReference type="HAMAP-Rule" id="MF_00500"/>
    </source>
</evidence>
<evidence type="ECO:0000256" key="2">
    <source>
        <dbReference type="SAM" id="MobiDB-lite"/>
    </source>
</evidence>
<evidence type="ECO:0000305" key="3"/>
<reference key="1">
    <citation type="journal article" date="2009" name="Genome Biol.">
        <title>Genomic and genetic analyses of diversity and plant interactions of Pseudomonas fluorescens.</title>
        <authorList>
            <person name="Silby M.W."/>
            <person name="Cerdeno-Tarraga A.M."/>
            <person name="Vernikos G.S."/>
            <person name="Giddens S.R."/>
            <person name="Jackson R.W."/>
            <person name="Preston G.M."/>
            <person name="Zhang X.-X."/>
            <person name="Moon C.D."/>
            <person name="Gehrig S.M."/>
            <person name="Godfrey S.A.C."/>
            <person name="Knight C.G."/>
            <person name="Malone J.G."/>
            <person name="Robinson Z."/>
            <person name="Spiers A.J."/>
            <person name="Harris S."/>
            <person name="Challis G.L."/>
            <person name="Yaxley A.M."/>
            <person name="Harris D."/>
            <person name="Seeger K."/>
            <person name="Murphy L."/>
            <person name="Rutter S."/>
            <person name="Squares R."/>
            <person name="Quail M.A."/>
            <person name="Saunders E."/>
            <person name="Mavromatis K."/>
            <person name="Brettin T.S."/>
            <person name="Bentley S.D."/>
            <person name="Hothersall J."/>
            <person name="Stephens E."/>
            <person name="Thomas C.M."/>
            <person name="Parkhill J."/>
            <person name="Levy S.B."/>
            <person name="Rainey P.B."/>
            <person name="Thomson N.R."/>
        </authorList>
    </citation>
    <scope>NUCLEOTIDE SEQUENCE [LARGE SCALE GENOMIC DNA]</scope>
    <source>
        <strain>Pf0-1</strain>
    </source>
</reference>
<organism>
    <name type="scientific">Pseudomonas fluorescens (strain Pf0-1)</name>
    <dbReference type="NCBI Taxonomy" id="205922"/>
    <lineage>
        <taxon>Bacteria</taxon>
        <taxon>Pseudomonadati</taxon>
        <taxon>Pseudomonadota</taxon>
        <taxon>Gammaproteobacteria</taxon>
        <taxon>Pseudomonadales</taxon>
        <taxon>Pseudomonadaceae</taxon>
        <taxon>Pseudomonas</taxon>
    </lineage>
</organism>
<sequence>MANSPSAKKRAKQAEKRRSHNASLRSMVRTYIKNVVKAIDAKDAEKAQAAYVLAVPVIDRMADKGIIHKNKAARHKSRLNGHVKALKAAA</sequence>